<accession>P82971</accession>
<sequence>IIFPGTLWCGNGNLANGTNQLGSWKETDSCCRTHDMCPDLIEAHGSKHGLTNAADYTRLSCECDEEFRRCLHNSGDTVSAGFVGRTYFTVLHTQCFRLDYPIVKCKVKSTILHRSKCYDFETFAPKKYQWFDVLQY</sequence>
<evidence type="ECO:0000250" key="1"/>
<evidence type="ECO:0000255" key="2">
    <source>
        <dbReference type="PROSITE-ProRule" id="PRU10035"/>
    </source>
</evidence>
<evidence type="ECO:0000269" key="3">
    <source>
    </source>
</evidence>
<evidence type="ECO:0000305" key="4"/>
<protein>
    <recommendedName>
        <fullName>Phospholipase A2</fullName>
        <shortName>PLA2</shortName>
        <ecNumber>3.1.1.4</ecNumber>
    </recommendedName>
    <alternativeName>
        <fullName>Phosphatidylcholine 2-acylhydrolase</fullName>
    </alternativeName>
    <allergenName>Bom t 1</allergenName>
</protein>
<organism>
    <name type="scientific">Bombus terrestris</name>
    <name type="common">Buff-tailed bumblebee</name>
    <name type="synonym">Apis terrestris</name>
    <dbReference type="NCBI Taxonomy" id="30195"/>
    <lineage>
        <taxon>Eukaryota</taxon>
        <taxon>Metazoa</taxon>
        <taxon>Ecdysozoa</taxon>
        <taxon>Arthropoda</taxon>
        <taxon>Hexapoda</taxon>
        <taxon>Insecta</taxon>
        <taxon>Pterygota</taxon>
        <taxon>Neoptera</taxon>
        <taxon>Endopterygota</taxon>
        <taxon>Hymenoptera</taxon>
        <taxon>Apocrita</taxon>
        <taxon>Aculeata</taxon>
        <taxon>Apoidea</taxon>
        <taxon>Anthophila</taxon>
        <taxon>Apidae</taxon>
        <taxon>Bombus</taxon>
        <taxon>Bombus</taxon>
    </lineage>
</organism>
<name>PA2_BOMTE</name>
<keyword id="KW-0020">Allergen</keyword>
<keyword id="KW-0106">Calcium</keyword>
<keyword id="KW-0903">Direct protein sequencing</keyword>
<keyword id="KW-1015">Disulfide bond</keyword>
<keyword id="KW-0325">Glycoprotein</keyword>
<keyword id="KW-0378">Hydrolase</keyword>
<keyword id="KW-0442">Lipid degradation</keyword>
<keyword id="KW-0443">Lipid metabolism</keyword>
<keyword id="KW-0479">Metal-binding</keyword>
<keyword id="KW-0964">Secreted</keyword>
<feature type="chain" id="PRO_0000161724" description="Phospholipase A2">
    <location>
        <begin position="1"/>
        <end position="136"/>
    </location>
</feature>
<feature type="active site" evidence="2">
    <location>
        <position position="34"/>
    </location>
</feature>
<feature type="active site" evidence="2">
    <location>
        <position position="64"/>
    </location>
</feature>
<feature type="binding site" evidence="1">
    <location>
        <position position="8"/>
    </location>
    <ligand>
        <name>Ca(2+)</name>
        <dbReference type="ChEBI" id="CHEBI:29108"/>
    </ligand>
</feature>
<feature type="binding site" evidence="1">
    <location>
        <position position="10"/>
    </location>
    <ligand>
        <name>Ca(2+)</name>
        <dbReference type="ChEBI" id="CHEBI:29108"/>
    </ligand>
</feature>
<feature type="binding site" evidence="1">
    <location>
        <position position="12"/>
    </location>
    <ligand>
        <name>Ca(2+)</name>
        <dbReference type="ChEBI" id="CHEBI:29108"/>
    </ligand>
</feature>
<feature type="binding site" evidence="1">
    <location>
        <position position="35"/>
    </location>
    <ligand>
        <name>Ca(2+)</name>
        <dbReference type="ChEBI" id="CHEBI:29108"/>
    </ligand>
</feature>
<feature type="glycosylation site" description="N-linked (GlcNAc...) asparagine">
    <location>
        <position position="16"/>
    </location>
</feature>
<feature type="disulfide bond" evidence="1">
    <location>
        <begin position="9"/>
        <end position="31"/>
    </location>
</feature>
<feature type="disulfide bond" evidence="1">
    <location>
        <begin position="30"/>
        <end position="70"/>
    </location>
</feature>
<feature type="disulfide bond" evidence="1">
    <location>
        <begin position="37"/>
        <end position="63"/>
    </location>
</feature>
<feature type="disulfide bond" evidence="1">
    <location>
        <begin position="61"/>
        <end position="95"/>
    </location>
</feature>
<feature type="disulfide bond" evidence="1">
    <location>
        <begin position="105"/>
        <end position="117"/>
    </location>
</feature>
<proteinExistence type="evidence at protein level"/>
<dbReference type="EC" id="3.1.1.4"/>
<dbReference type="SMR" id="P82971"/>
<dbReference type="Allergome" id="155">
    <property type="allergen name" value="Bom t 1"/>
</dbReference>
<dbReference type="Allergome" id="3159">
    <property type="allergen name" value="Bom t 1.0101"/>
</dbReference>
<dbReference type="Proteomes" id="UP000835206">
    <property type="component" value="Unplaced"/>
</dbReference>
<dbReference type="GO" id="GO:0005576">
    <property type="term" value="C:extracellular region"/>
    <property type="evidence" value="ECO:0007669"/>
    <property type="project" value="UniProtKB-SubCell"/>
</dbReference>
<dbReference type="GO" id="GO:0046872">
    <property type="term" value="F:metal ion binding"/>
    <property type="evidence" value="ECO:0007669"/>
    <property type="project" value="UniProtKB-KW"/>
</dbReference>
<dbReference type="GO" id="GO:0004623">
    <property type="term" value="F:phospholipase A2 activity"/>
    <property type="evidence" value="ECO:0007669"/>
    <property type="project" value="UniProtKB-EC"/>
</dbReference>
<dbReference type="GO" id="GO:0050482">
    <property type="term" value="P:arachidonate secretion"/>
    <property type="evidence" value="ECO:0007669"/>
    <property type="project" value="InterPro"/>
</dbReference>
<dbReference type="GO" id="GO:0016042">
    <property type="term" value="P:lipid catabolic process"/>
    <property type="evidence" value="ECO:0007669"/>
    <property type="project" value="UniProtKB-KW"/>
</dbReference>
<dbReference type="GO" id="GO:0006644">
    <property type="term" value="P:phospholipid metabolic process"/>
    <property type="evidence" value="ECO:0007669"/>
    <property type="project" value="InterPro"/>
</dbReference>
<dbReference type="CDD" id="cd04704">
    <property type="entry name" value="PLA2_bee_venom_like"/>
    <property type="match status" value="1"/>
</dbReference>
<dbReference type="FunFam" id="1.20.90.10:FF:000002">
    <property type="entry name" value="Phospholipase A2 group III"/>
    <property type="match status" value="1"/>
</dbReference>
<dbReference type="Gene3D" id="1.20.90.10">
    <property type="entry name" value="Phospholipase A2 domain"/>
    <property type="match status" value="1"/>
</dbReference>
<dbReference type="InterPro" id="IPR016090">
    <property type="entry name" value="PLipase_A2_dom"/>
</dbReference>
<dbReference type="InterPro" id="IPR036444">
    <property type="entry name" value="PLipase_A2_dom_sf"/>
</dbReference>
<dbReference type="InterPro" id="IPR033113">
    <property type="entry name" value="PLipase_A2_His_AS"/>
</dbReference>
<dbReference type="PANTHER" id="PTHR12253">
    <property type="entry name" value="RH14732P"/>
    <property type="match status" value="1"/>
</dbReference>
<dbReference type="Pfam" id="PF05826">
    <property type="entry name" value="Phospholip_A2_2"/>
    <property type="match status" value="1"/>
</dbReference>
<dbReference type="SMART" id="SM00085">
    <property type="entry name" value="PA2c"/>
    <property type="match status" value="1"/>
</dbReference>
<dbReference type="SUPFAM" id="SSF48619">
    <property type="entry name" value="Phospholipase A2, PLA2"/>
    <property type="match status" value="1"/>
</dbReference>
<dbReference type="PROSITE" id="PS00118">
    <property type="entry name" value="PA2_HIS"/>
    <property type="match status" value="1"/>
</dbReference>
<comment type="function">
    <text>PLA2 catalyzes the calcium-dependent hydrolysis of the 2-acyl groups in 3-sn-phosphoglycerides.</text>
</comment>
<comment type="catalytic activity">
    <reaction evidence="2">
        <text>a 1,2-diacyl-sn-glycero-3-phosphocholine + H2O = a 1-acyl-sn-glycero-3-phosphocholine + a fatty acid + H(+)</text>
        <dbReference type="Rhea" id="RHEA:15801"/>
        <dbReference type="ChEBI" id="CHEBI:15377"/>
        <dbReference type="ChEBI" id="CHEBI:15378"/>
        <dbReference type="ChEBI" id="CHEBI:28868"/>
        <dbReference type="ChEBI" id="CHEBI:57643"/>
        <dbReference type="ChEBI" id="CHEBI:58168"/>
        <dbReference type="EC" id="3.1.1.4"/>
    </reaction>
</comment>
<comment type="cofactor">
    <cofactor evidence="1">
        <name>Ca(2+)</name>
        <dbReference type="ChEBI" id="CHEBI:29108"/>
    </cofactor>
    <text evidence="1">Binds 1 Ca(2+) ion.</text>
</comment>
<comment type="subcellular location">
    <subcellularLocation>
        <location evidence="3">Secreted</location>
    </subcellularLocation>
</comment>
<comment type="tissue specificity">
    <text evidence="3">Expressed by the venom gland.</text>
</comment>
<comment type="allergen">
    <text evidence="3">Causes an allergic reaction in human.</text>
</comment>
<comment type="similarity">
    <text evidence="4">Belongs to the phospholipase A2 family.</text>
</comment>
<reference key="1">
    <citation type="journal article" date="2001" name="J. Allergy Clin. Immunol.">
        <title>Occupational allergy to bumblebees: allergens of Bombus terrestris.</title>
        <authorList>
            <person name="Hoffman D.R."/>
            <person name="El-Choufani S.E."/>
            <person name="Smith M.M."/>
            <person name="de Groot H."/>
        </authorList>
    </citation>
    <scope>PROTEIN SEQUENCE</scope>
    <scope>SUBCELLULAR LOCATION</scope>
    <scope>TISSUE SPECIFICITY</scope>
    <scope>ALLERGEN</scope>
    <source>
        <tissue>Venom</tissue>
    </source>
</reference>